<organism>
    <name type="scientific">Methanocaldococcus jannaschii (strain ATCC 43067 / DSM 2661 / JAL-1 / JCM 10045 / NBRC 100440)</name>
    <name type="common">Methanococcus jannaschii</name>
    <dbReference type="NCBI Taxonomy" id="243232"/>
    <lineage>
        <taxon>Archaea</taxon>
        <taxon>Methanobacteriati</taxon>
        <taxon>Methanobacteriota</taxon>
        <taxon>Methanomada group</taxon>
        <taxon>Methanococci</taxon>
        <taxon>Methanococcales</taxon>
        <taxon>Methanocaldococcaceae</taxon>
        <taxon>Methanocaldococcus</taxon>
    </lineage>
</organism>
<name>Y1479_METJA</name>
<feature type="chain" id="PRO_0000163832" description="Uncharacterized aminotransferase MJ1479">
    <location>
        <begin position="1"/>
        <end position="432"/>
    </location>
</feature>
<feature type="modified residue" description="N6-(pyridoxal phosphate)lysine" evidence="1">
    <location>
        <position position="243"/>
    </location>
</feature>
<keyword id="KW-0032">Aminotransferase</keyword>
<keyword id="KW-0963">Cytoplasm</keyword>
<keyword id="KW-0663">Pyridoxal phosphate</keyword>
<keyword id="KW-1185">Reference proteome</keyword>
<keyword id="KW-0808">Transferase</keyword>
<accession>Q58874</accession>
<protein>
    <recommendedName>
        <fullName>Uncharacterized aminotransferase MJ1479</fullName>
        <ecNumber>2.6.1.-</ecNumber>
    </recommendedName>
</protein>
<dbReference type="EC" id="2.6.1.-"/>
<dbReference type="EMBL" id="L77117">
    <property type="protein sequence ID" value="AAB99491.1"/>
    <property type="molecule type" value="Genomic_DNA"/>
</dbReference>
<dbReference type="PIR" id="F64484">
    <property type="entry name" value="F64484"/>
</dbReference>
<dbReference type="RefSeq" id="WP_010871000.1">
    <property type="nucleotide sequence ID" value="NC_000909.1"/>
</dbReference>
<dbReference type="SMR" id="Q58874"/>
<dbReference type="FunCoup" id="Q58874">
    <property type="interactions" value="65"/>
</dbReference>
<dbReference type="STRING" id="243232.MJ_1479"/>
<dbReference type="PaxDb" id="243232-MJ_1479"/>
<dbReference type="EnsemblBacteria" id="AAB99491">
    <property type="protein sequence ID" value="AAB99491"/>
    <property type="gene ID" value="MJ_1479"/>
</dbReference>
<dbReference type="GeneID" id="1452384"/>
<dbReference type="KEGG" id="mja:MJ_1479"/>
<dbReference type="eggNOG" id="arCOG01135">
    <property type="taxonomic scope" value="Archaea"/>
</dbReference>
<dbReference type="HOGENOM" id="CLU_017584_4_2_2"/>
<dbReference type="InParanoid" id="Q58874"/>
<dbReference type="OrthoDB" id="372018at2157"/>
<dbReference type="PhylomeDB" id="Q58874"/>
<dbReference type="Proteomes" id="UP000000805">
    <property type="component" value="Chromosome"/>
</dbReference>
<dbReference type="GO" id="GO:0005737">
    <property type="term" value="C:cytoplasm"/>
    <property type="evidence" value="ECO:0007669"/>
    <property type="project" value="UniProtKB-SubCell"/>
</dbReference>
<dbReference type="GO" id="GO:0030170">
    <property type="term" value="F:pyridoxal phosphate binding"/>
    <property type="evidence" value="ECO:0007669"/>
    <property type="project" value="InterPro"/>
</dbReference>
<dbReference type="GO" id="GO:0008483">
    <property type="term" value="F:transaminase activity"/>
    <property type="evidence" value="ECO:0007669"/>
    <property type="project" value="UniProtKB-KW"/>
</dbReference>
<dbReference type="GO" id="GO:0009058">
    <property type="term" value="P:biosynthetic process"/>
    <property type="evidence" value="ECO:0007669"/>
    <property type="project" value="InterPro"/>
</dbReference>
<dbReference type="CDD" id="cd00609">
    <property type="entry name" value="AAT_like"/>
    <property type="match status" value="1"/>
</dbReference>
<dbReference type="Gene3D" id="3.90.1150.10">
    <property type="entry name" value="Aspartate Aminotransferase, domain 1"/>
    <property type="match status" value="1"/>
</dbReference>
<dbReference type="Gene3D" id="3.40.640.10">
    <property type="entry name" value="Type I PLP-dependent aspartate aminotransferase-like (Major domain)"/>
    <property type="match status" value="1"/>
</dbReference>
<dbReference type="InterPro" id="IPR051926">
    <property type="entry name" value="Ala_Aminotransferase"/>
</dbReference>
<dbReference type="InterPro" id="IPR004839">
    <property type="entry name" value="Aminotransferase_I/II_large"/>
</dbReference>
<dbReference type="InterPro" id="IPR015424">
    <property type="entry name" value="PyrdxlP-dep_Trfase"/>
</dbReference>
<dbReference type="InterPro" id="IPR015421">
    <property type="entry name" value="PyrdxlP-dep_Trfase_major"/>
</dbReference>
<dbReference type="InterPro" id="IPR015422">
    <property type="entry name" value="PyrdxlP-dep_Trfase_small"/>
</dbReference>
<dbReference type="NCBIfam" id="NF005334">
    <property type="entry name" value="PRK06855.1"/>
    <property type="match status" value="1"/>
</dbReference>
<dbReference type="PANTHER" id="PTHR43488">
    <property type="entry name" value="GLUTAMATE-PYRUVATE AMINOTRANSFERASE ALAA"/>
    <property type="match status" value="1"/>
</dbReference>
<dbReference type="PANTHER" id="PTHR43488:SF2">
    <property type="entry name" value="GLUTAMATE-PYRUVATE AMINOTRANSFERASE ALAA"/>
    <property type="match status" value="1"/>
</dbReference>
<dbReference type="Pfam" id="PF00155">
    <property type="entry name" value="Aminotran_1_2"/>
    <property type="match status" value="1"/>
</dbReference>
<dbReference type="SUPFAM" id="SSF53383">
    <property type="entry name" value="PLP-dependent transferases"/>
    <property type="match status" value="1"/>
</dbReference>
<gene>
    <name type="ordered locus">MJ1479</name>
</gene>
<proteinExistence type="inferred from homology"/>
<sequence>MRNPIIDVGAKELSYEIREIVDVAKKIEEFGINITWENIGDPVAKGEKIPDWIKDIIAEIVKNDCSYAYCPTKGLLETREFLAEQVNKRGGVQITAEDIIFFNGLGDAIAKIYGLLKRQVRVINPSPSYSTHSSAEASHAGSPPVTYFLDPYNYWYPDIDDLEKRIKYNPAVSGILVINPDNPTGAVYPKKILNEIVDLANEYDLFIICDEIYCNLVYNGKKQHLLCEVIDDVCGLSLKGISKELPWPGARCGWIEIYNADKDEEFKKYVESIYKAKLIEVCSTTLPQMAIPRIMGHRNYKKYLEERNRFFEKRSNTAYKKLKDLDGVIANKANGAFYMSVVFEDNYLNGNNSIKIENEKLKEFIEHQIKDASIDKKFVYYLLASTGICVVPLTSFCSQLNGFRVTLLERDDEKFEWIFDTLAEKIDEFLKT</sequence>
<evidence type="ECO:0000250" key="1"/>
<evidence type="ECO:0000305" key="2"/>
<comment type="cofactor">
    <cofactor evidence="1">
        <name>pyridoxal 5'-phosphate</name>
        <dbReference type="ChEBI" id="CHEBI:597326"/>
    </cofactor>
</comment>
<comment type="subcellular location">
    <subcellularLocation>
        <location evidence="1">Cytoplasm</location>
    </subcellularLocation>
</comment>
<comment type="similarity">
    <text evidence="2">Belongs to the class-II pyridoxal-phosphate-dependent aminotransferase family.</text>
</comment>
<reference key="1">
    <citation type="journal article" date="1996" name="Science">
        <title>Complete genome sequence of the methanogenic archaeon, Methanococcus jannaschii.</title>
        <authorList>
            <person name="Bult C.J."/>
            <person name="White O."/>
            <person name="Olsen G.J."/>
            <person name="Zhou L."/>
            <person name="Fleischmann R.D."/>
            <person name="Sutton G.G."/>
            <person name="Blake J.A."/>
            <person name="FitzGerald L.M."/>
            <person name="Clayton R.A."/>
            <person name="Gocayne J.D."/>
            <person name="Kerlavage A.R."/>
            <person name="Dougherty B.A."/>
            <person name="Tomb J.-F."/>
            <person name="Adams M.D."/>
            <person name="Reich C.I."/>
            <person name="Overbeek R."/>
            <person name="Kirkness E.F."/>
            <person name="Weinstock K.G."/>
            <person name="Merrick J.M."/>
            <person name="Glodek A."/>
            <person name="Scott J.L."/>
            <person name="Geoghagen N.S.M."/>
            <person name="Weidman J.F."/>
            <person name="Fuhrmann J.L."/>
            <person name="Nguyen D."/>
            <person name="Utterback T.R."/>
            <person name="Kelley J.M."/>
            <person name="Peterson J.D."/>
            <person name="Sadow P.W."/>
            <person name="Hanna M.C."/>
            <person name="Cotton M.D."/>
            <person name="Roberts K.M."/>
            <person name="Hurst M.A."/>
            <person name="Kaine B.P."/>
            <person name="Borodovsky M."/>
            <person name="Klenk H.-P."/>
            <person name="Fraser C.M."/>
            <person name="Smith H.O."/>
            <person name="Woese C.R."/>
            <person name="Venter J.C."/>
        </authorList>
    </citation>
    <scope>NUCLEOTIDE SEQUENCE [LARGE SCALE GENOMIC DNA]</scope>
    <source>
        <strain>ATCC 43067 / DSM 2661 / JAL-1 / JCM 10045 / NBRC 100440</strain>
    </source>
</reference>